<evidence type="ECO:0000250" key="1">
    <source>
        <dbReference type="UniProtKB" id="Q5QD04"/>
    </source>
</evidence>
<evidence type="ECO:0000250" key="2">
    <source>
        <dbReference type="UniProtKB" id="Q5QD06"/>
    </source>
</evidence>
<evidence type="ECO:0000250" key="3">
    <source>
        <dbReference type="UniProtKB" id="Q923Y0"/>
    </source>
</evidence>
<evidence type="ECO:0000255" key="4"/>
<evidence type="ECO:0000255" key="5">
    <source>
        <dbReference type="PROSITE-ProRule" id="PRU00521"/>
    </source>
</evidence>
<evidence type="ECO:0000303" key="6">
    <source>
    </source>
</evidence>
<evidence type="ECO:0000312" key="7">
    <source>
        <dbReference type="RGD" id="631386"/>
    </source>
</evidence>
<reference key="1">
    <citation type="journal article" date="2001" name="Proc. Natl. Acad. Sci. U.S.A.">
        <title>Trace amines: identification of a family of mammalian G protein-coupled receptors.</title>
        <authorList>
            <person name="Borowsky B."/>
            <person name="Adham N."/>
            <person name="Jones K.A."/>
            <person name="Raddatz R."/>
            <person name="Artymyshyn R."/>
            <person name="Ogozalek K.L."/>
            <person name="Durkin M.M."/>
            <person name="Lakhlani P.P."/>
            <person name="Bonini J.A."/>
            <person name="Pathirana S."/>
            <person name="Boyle N."/>
            <person name="Pu X."/>
            <person name="Kouranova E."/>
            <person name="Lichtblau H."/>
            <person name="Ochoa F.Y."/>
            <person name="Branchek T.A."/>
            <person name="Gerald C."/>
        </authorList>
    </citation>
    <scope>NUCLEOTIDE SEQUENCE [GENOMIC DNA]</scope>
    <source>
        <strain>Sprague-Dawley</strain>
    </source>
</reference>
<protein>
    <recommendedName>
        <fullName>Trace amine-associated receptor 8b</fullName>
        <shortName>TaR-8b</shortName>
        <shortName>Trace amine receptor 8b</shortName>
    </recommendedName>
    <alternativeName>
        <fullName evidence="6">Trace amine receptor 7</fullName>
        <shortName evidence="6">TaR-7</shortName>
    </alternativeName>
</protein>
<comment type="function">
    <text evidence="3">Olfactory receptor activated by trace amines. Trace amine compounds are enriched in animal body fluids and act on trace amine-associated receptors (TAARs) to elicit both intraspecific and interspecific innate behaviors. Ligand-binding causes a conformation change that triggers signaling via G(s)-class of G alpha proteins (GNAL or GNAS).</text>
</comment>
<comment type="subcellular location">
    <subcellularLocation>
        <location evidence="2">Cell membrane</location>
        <topology evidence="4">Multi-pass membrane protein</topology>
    </subcellularLocation>
</comment>
<comment type="similarity">
    <text evidence="5">Belongs to the G-protein coupled receptor 1 family.</text>
</comment>
<dbReference type="EMBL" id="AF380195">
    <property type="protein sequence ID" value="AAK71246.1"/>
    <property type="molecule type" value="Genomic_DNA"/>
</dbReference>
<dbReference type="RefSeq" id="NP_783191.1">
    <property type="nucleotide sequence ID" value="NM_175601.1"/>
</dbReference>
<dbReference type="RefSeq" id="XP_017444799.1">
    <property type="nucleotide sequence ID" value="XM_017589310.2"/>
</dbReference>
<dbReference type="RefSeq" id="XP_017444800.1">
    <property type="nucleotide sequence ID" value="XM_017589311.1"/>
</dbReference>
<dbReference type="SMR" id="Q923Y3"/>
<dbReference type="FunCoup" id="Q923Y3">
    <property type="interactions" value="32"/>
</dbReference>
<dbReference type="GlyCosmos" id="Q923Y3">
    <property type="glycosylation" value="2 sites, No reported glycans"/>
</dbReference>
<dbReference type="GlyGen" id="Q923Y3">
    <property type="glycosylation" value="2 sites"/>
</dbReference>
<dbReference type="GeneID" id="319106"/>
<dbReference type="KEGG" id="rno:319106"/>
<dbReference type="AGR" id="RGD:631386"/>
<dbReference type="CTD" id="382348"/>
<dbReference type="RGD" id="631386">
    <property type="gene designation" value="Taar8b"/>
</dbReference>
<dbReference type="InParanoid" id="Q923Y3"/>
<dbReference type="OrthoDB" id="5959645at2759"/>
<dbReference type="PhylomeDB" id="Q923Y3"/>
<dbReference type="TreeFam" id="TF343107"/>
<dbReference type="PRO" id="PR:Q923Y3"/>
<dbReference type="Proteomes" id="UP000002494">
    <property type="component" value="Unplaced"/>
</dbReference>
<dbReference type="GO" id="GO:0005886">
    <property type="term" value="C:plasma membrane"/>
    <property type="evidence" value="ECO:0000266"/>
    <property type="project" value="RGD"/>
</dbReference>
<dbReference type="GO" id="GO:0001594">
    <property type="term" value="F:trace-amine receptor activity"/>
    <property type="evidence" value="ECO:0000318"/>
    <property type="project" value="GO_Central"/>
</dbReference>
<dbReference type="GO" id="GO:0007186">
    <property type="term" value="P:G protein-coupled receptor signaling pathway"/>
    <property type="evidence" value="ECO:0000318"/>
    <property type="project" value="GO_Central"/>
</dbReference>
<dbReference type="FunFam" id="1.20.1070.10:FF:000030">
    <property type="entry name" value="trace amine-associated receptor 1"/>
    <property type="match status" value="1"/>
</dbReference>
<dbReference type="Gene3D" id="1.20.1070.10">
    <property type="entry name" value="Rhodopsin 7-helix transmembrane proteins"/>
    <property type="match status" value="1"/>
</dbReference>
<dbReference type="InterPro" id="IPR000276">
    <property type="entry name" value="GPCR_Rhodpsn"/>
</dbReference>
<dbReference type="InterPro" id="IPR017452">
    <property type="entry name" value="GPCR_Rhodpsn_7TM"/>
</dbReference>
<dbReference type="InterPro" id="IPR050569">
    <property type="entry name" value="TAAR"/>
</dbReference>
<dbReference type="InterPro" id="IPR009132">
    <property type="entry name" value="TAAR_fam"/>
</dbReference>
<dbReference type="PANTHER" id="PTHR24249">
    <property type="entry name" value="HISTAMINE RECEPTOR-RELATED G-PROTEIN COUPLED RECEPTOR"/>
    <property type="match status" value="1"/>
</dbReference>
<dbReference type="PANTHER" id="PTHR24249:SF405">
    <property type="entry name" value="TRACE AMINE-ASSOCIATED RECEPTOR 8"/>
    <property type="match status" value="1"/>
</dbReference>
<dbReference type="Pfam" id="PF00001">
    <property type="entry name" value="7tm_1"/>
    <property type="match status" value="1"/>
</dbReference>
<dbReference type="PRINTS" id="PR00237">
    <property type="entry name" value="GPCRRHODOPSN"/>
</dbReference>
<dbReference type="PRINTS" id="PR01830">
    <property type="entry name" value="TRACEAMINER"/>
</dbReference>
<dbReference type="SMART" id="SM01381">
    <property type="entry name" value="7TM_GPCR_Srsx"/>
    <property type="match status" value="1"/>
</dbReference>
<dbReference type="SUPFAM" id="SSF81321">
    <property type="entry name" value="Family A G protein-coupled receptor-like"/>
    <property type="match status" value="1"/>
</dbReference>
<dbReference type="PROSITE" id="PS00237">
    <property type="entry name" value="G_PROTEIN_RECEP_F1_1"/>
    <property type="match status" value="1"/>
</dbReference>
<dbReference type="PROSITE" id="PS50262">
    <property type="entry name" value="G_PROTEIN_RECEP_F1_2"/>
    <property type="match status" value="1"/>
</dbReference>
<keyword id="KW-1003">Cell membrane</keyword>
<keyword id="KW-1015">Disulfide bond</keyword>
<keyword id="KW-0297">G-protein coupled receptor</keyword>
<keyword id="KW-0325">Glycoprotein</keyword>
<keyword id="KW-0472">Membrane</keyword>
<keyword id="KW-0675">Receptor</keyword>
<keyword id="KW-1185">Reference proteome</keyword>
<keyword id="KW-0807">Transducer</keyword>
<keyword id="KW-0812">Transmembrane</keyword>
<keyword id="KW-1133">Transmembrane helix</keyword>
<proteinExistence type="inferred from homology"/>
<feature type="chain" id="PRO_0000070178" description="Trace amine-associated receptor 8b">
    <location>
        <begin position="1"/>
        <end position="344"/>
    </location>
</feature>
<feature type="topological domain" description="Extracellular" evidence="4">
    <location>
        <begin position="1"/>
        <end position="33"/>
    </location>
</feature>
<feature type="transmembrane region" description="Helical; Name=1" evidence="4">
    <location>
        <begin position="34"/>
        <end position="54"/>
    </location>
</feature>
<feature type="topological domain" description="Cytoplasmic" evidence="4">
    <location>
        <begin position="55"/>
        <end position="67"/>
    </location>
</feature>
<feature type="transmembrane region" description="Helical; Name=2" evidence="4">
    <location>
        <begin position="68"/>
        <end position="88"/>
    </location>
</feature>
<feature type="topological domain" description="Extracellular" evidence="4">
    <location>
        <begin position="89"/>
        <end position="102"/>
    </location>
</feature>
<feature type="transmembrane region" description="Helical; Name=3" evidence="4">
    <location>
        <begin position="103"/>
        <end position="127"/>
    </location>
</feature>
<feature type="topological domain" description="Cytoplasmic" evidence="4">
    <location>
        <begin position="128"/>
        <end position="146"/>
    </location>
</feature>
<feature type="transmembrane region" description="Helical; Name=4" evidence="4">
    <location>
        <begin position="147"/>
        <end position="167"/>
    </location>
</feature>
<feature type="topological domain" description="Extracellular" evidence="4">
    <location>
        <begin position="168"/>
        <end position="196"/>
    </location>
</feature>
<feature type="transmembrane region" description="Helical; Name=5" evidence="4">
    <location>
        <begin position="197"/>
        <end position="217"/>
    </location>
</feature>
<feature type="topological domain" description="Cytoplasmic" evidence="4">
    <location>
        <begin position="218"/>
        <end position="256"/>
    </location>
</feature>
<feature type="transmembrane region" description="Helical; Name=6" evidence="4">
    <location>
        <begin position="257"/>
        <end position="277"/>
    </location>
</feature>
<feature type="topological domain" description="Extracellular" evidence="4">
    <location>
        <begin position="278"/>
        <end position="295"/>
    </location>
</feature>
<feature type="transmembrane region" description="Helical; Name=7" evidence="4">
    <location>
        <begin position="296"/>
        <end position="319"/>
    </location>
</feature>
<feature type="topological domain" description="Cytoplasmic" evidence="4">
    <location>
        <begin position="320"/>
        <end position="344"/>
    </location>
</feature>
<feature type="glycosylation site" description="N-linked (GlcNAc...) asparagine" evidence="4">
    <location>
        <position position="4"/>
    </location>
</feature>
<feature type="glycosylation site" description="N-linked (GlcNAc...) asparagine" evidence="4">
    <location>
        <position position="18"/>
    </location>
</feature>
<feature type="disulfide bond" evidence="1">
    <location>
        <begin position="21"/>
        <end position="185"/>
    </location>
</feature>
<feature type="disulfide bond" evidence="5">
    <location>
        <begin position="104"/>
        <end position="189"/>
    </location>
</feature>
<sequence>MTSNFSQATLQLCYENVNASCIKTPYSPGLRVLLYMVFGFGAVLAVCGNLLVVISVLHFKQLHSPANFLIASLASADFLVGISVMPFSMVRSIESCWYFGDTFCSLHSCCDAAFCYSSLFHLCFISVDRYIAVTEPLVYPTKFTMSVSGICISISWILPLVYSSAVFYTGISATGIENLVSALNCVGGCQVAINQDWVLISFLLFFIPTLVMIILYSKIFLVAKQQAVKIETSISGSKGESSLESHKARVAKRERKAAKTLGVTVMAFMVSWLPYTIDTLIDAFMGFITPAYVYEICGWIAYYNSAMNPLIYAFFYPWFRKAIKLILSGKILKGHSSTTSLFSE</sequence>
<name>TAA8B_RAT</name>
<gene>
    <name evidence="7" type="primary">Taar8b</name>
    <name evidence="6" type="synonym">Ta7</name>
    <name evidence="6" type="synonym">Tar7</name>
    <name evidence="6" type="synonym">Trar7</name>
</gene>
<organism>
    <name type="scientific">Rattus norvegicus</name>
    <name type="common">Rat</name>
    <dbReference type="NCBI Taxonomy" id="10116"/>
    <lineage>
        <taxon>Eukaryota</taxon>
        <taxon>Metazoa</taxon>
        <taxon>Chordata</taxon>
        <taxon>Craniata</taxon>
        <taxon>Vertebrata</taxon>
        <taxon>Euteleostomi</taxon>
        <taxon>Mammalia</taxon>
        <taxon>Eutheria</taxon>
        <taxon>Euarchontoglires</taxon>
        <taxon>Glires</taxon>
        <taxon>Rodentia</taxon>
        <taxon>Myomorpha</taxon>
        <taxon>Muroidea</taxon>
        <taxon>Muridae</taxon>
        <taxon>Murinae</taxon>
        <taxon>Rattus</taxon>
    </lineage>
</organism>
<accession>Q923Y3</accession>